<name>SSBF_ECOLI</name>
<gene>
    <name type="primary">ssbF</name>
    <name type="synonym">ssb</name>
    <name type="synonym">ssf</name>
    <name type="ordered locus">ECOK12F060</name>
</gene>
<evidence type="ECO:0000250" key="1"/>
<evidence type="ECO:0000255" key="2">
    <source>
        <dbReference type="HAMAP-Rule" id="MF_00984"/>
    </source>
</evidence>
<evidence type="ECO:0000256" key="3">
    <source>
        <dbReference type="SAM" id="MobiDB-lite"/>
    </source>
</evidence>
<evidence type="ECO:0000269" key="4">
    <source>
    </source>
</evidence>
<accession>P18310</accession>
<geneLocation type="plasmid">
    <name>F</name>
</geneLocation>
<keyword id="KW-0235">DNA replication</keyword>
<keyword id="KW-0238">DNA-binding</keyword>
<keyword id="KW-0614">Plasmid</keyword>
<feature type="initiator methionine" description="Removed" evidence="1">
    <location>
        <position position="1"/>
    </location>
</feature>
<feature type="chain" id="PRO_0000096042" description="Plasmid-derived single-stranded DNA-binding protein">
    <location>
        <begin position="2"/>
        <end position="179"/>
    </location>
</feature>
<feature type="domain" description="SSB" evidence="2">
    <location>
        <begin position="6"/>
        <end position="110"/>
    </location>
</feature>
<feature type="DNA-binding region" evidence="2">
    <location>
        <begin position="55"/>
        <end position="61"/>
    </location>
</feature>
<feature type="region of interest" description="Disordered" evidence="3">
    <location>
        <begin position="117"/>
        <end position="179"/>
    </location>
</feature>
<feature type="compositionally biased region" description="Polar residues" evidence="3">
    <location>
        <begin position="118"/>
        <end position="132"/>
    </location>
</feature>
<feature type="compositionally biased region" description="Basic residues" evidence="3">
    <location>
        <begin position="145"/>
        <end position="155"/>
    </location>
</feature>
<feature type="compositionally biased region" description="Acidic residues" evidence="3">
    <location>
        <begin position="167"/>
        <end position="179"/>
    </location>
</feature>
<comment type="function">
    <text evidence="4">May contribute to the conjugative processing of DNA. It has a functional relationship with Psi (plasmid-mediated sos inhibition) proteins.</text>
</comment>
<comment type="subunit">
    <text evidence="2">Homotetramer.</text>
</comment>
<organism>
    <name type="scientific">Escherichia coli (strain K12)</name>
    <dbReference type="NCBI Taxonomy" id="83333"/>
    <lineage>
        <taxon>Bacteria</taxon>
        <taxon>Pseudomonadati</taxon>
        <taxon>Pseudomonadota</taxon>
        <taxon>Gammaproteobacteria</taxon>
        <taxon>Enterobacterales</taxon>
        <taxon>Enterobacteriaceae</taxon>
        <taxon>Escherichia</taxon>
    </lineage>
</organism>
<sequence length="179" mass="19636">MAVRGINKVILVGRLGKDPEVRYIPNGGAVANLQVATSESWRDKQTGEMREQTEWHRVVLFGKLAEVAGECLRKGAQVYIEGQLRTRSWEDNGITRYVTEILVKTTGTMQMLVRAAGAQTQPEEGQQFSGQPQPEPQAEAGTKKGGAKTKGRGRKAAQPEPQPQPPEGDDYGFSDDIPF</sequence>
<reference key="1">
    <citation type="journal article" date="1983" name="Proc. Natl. Acad. Sci. U.S.A.">
        <title>F sex factor encodes a single-stranded DNA binding protein (SSB) with extensive sequence homology to Escherichia coli SSB.</title>
        <authorList>
            <person name="Chase J.W."/>
            <person name="Merrill B.M."/>
            <person name="Williams K.R."/>
        </authorList>
    </citation>
    <scope>NUCLEOTIDE SEQUENCE [GENOMIC DNA]</scope>
</reference>
<reference key="2">
    <citation type="submission" date="2000-04" db="EMBL/GenBank/DDBJ databases">
        <title>Complete nucleotide sequence of the F plasmid: its implications for organization and diversification of plasmid genomes.</title>
        <authorList>
            <person name="Shimizu H."/>
            <person name="Saitoh Y."/>
            <person name="Suda Y."/>
            <person name="Uehara K."/>
            <person name="Sampei G."/>
            <person name="Mizobuchi K."/>
        </authorList>
    </citation>
    <scope>NUCLEOTIDE SEQUENCE [LARGE SCALE GENOMIC DNA]</scope>
    <source>
        <strain>K12 / CR63</strain>
    </source>
</reference>
<reference key="3">
    <citation type="journal article" date="1991" name="J. Bacteriol.">
        <title>The single-stranded-DNA-binding protein encoded by the Escherichia coli F factor can complement a deletion of the chromosomal ssb gene.</title>
        <authorList>
            <person name="Porter R.D."/>
            <person name="Black S."/>
        </authorList>
    </citation>
    <scope>FUNCTION</scope>
</reference>
<dbReference type="EMBL" id="K00066">
    <property type="protein sequence ID" value="AAA83020.1"/>
    <property type="molecule type" value="Genomic_DNA"/>
</dbReference>
<dbReference type="EMBL" id="AP001918">
    <property type="protein sequence ID" value="BAA97930.1"/>
    <property type="molecule type" value="Genomic_DNA"/>
</dbReference>
<dbReference type="PIR" id="A20023">
    <property type="entry name" value="DDECF"/>
</dbReference>
<dbReference type="RefSeq" id="NP_061439.1">
    <property type="nucleotide sequence ID" value="NC_002483.1"/>
</dbReference>
<dbReference type="RefSeq" id="WP_000290801.1">
    <property type="nucleotide sequence ID" value="NZ_JACEFS010000057.1"/>
</dbReference>
<dbReference type="SMR" id="P18310"/>
<dbReference type="BioGRID" id="4054815">
    <property type="interactions" value="1"/>
</dbReference>
<dbReference type="KEGG" id="ecoc:C3026_24400"/>
<dbReference type="PhylomeDB" id="P18310"/>
<dbReference type="PRO" id="PR:P18310"/>
<dbReference type="GO" id="GO:0003697">
    <property type="term" value="F:single-stranded DNA binding"/>
    <property type="evidence" value="ECO:0007669"/>
    <property type="project" value="UniProtKB-UniRule"/>
</dbReference>
<dbReference type="GO" id="GO:0006260">
    <property type="term" value="P:DNA replication"/>
    <property type="evidence" value="ECO:0007669"/>
    <property type="project" value="UniProtKB-KW"/>
</dbReference>
<dbReference type="CDD" id="cd04496">
    <property type="entry name" value="SSB_OBF"/>
    <property type="match status" value="1"/>
</dbReference>
<dbReference type="Gene3D" id="2.40.50.140">
    <property type="entry name" value="Nucleic acid-binding proteins"/>
    <property type="match status" value="1"/>
</dbReference>
<dbReference type="HAMAP" id="MF_00984">
    <property type="entry name" value="SSB"/>
    <property type="match status" value="1"/>
</dbReference>
<dbReference type="InterPro" id="IPR012340">
    <property type="entry name" value="NA-bd_OB-fold"/>
</dbReference>
<dbReference type="InterPro" id="IPR000424">
    <property type="entry name" value="Primosome_PriB/ssb"/>
</dbReference>
<dbReference type="InterPro" id="IPR011344">
    <property type="entry name" value="ssDNA-bd"/>
</dbReference>
<dbReference type="NCBIfam" id="NF010292">
    <property type="entry name" value="PRK13732.1"/>
    <property type="match status" value="1"/>
</dbReference>
<dbReference type="NCBIfam" id="TIGR00621">
    <property type="entry name" value="ssb"/>
    <property type="match status" value="1"/>
</dbReference>
<dbReference type="PANTHER" id="PTHR10302">
    <property type="entry name" value="SINGLE-STRANDED DNA-BINDING PROTEIN"/>
    <property type="match status" value="1"/>
</dbReference>
<dbReference type="PANTHER" id="PTHR10302:SF27">
    <property type="entry name" value="SINGLE-STRANDED DNA-BINDING PROTEIN"/>
    <property type="match status" value="1"/>
</dbReference>
<dbReference type="Pfam" id="PF00436">
    <property type="entry name" value="SSB"/>
    <property type="match status" value="1"/>
</dbReference>
<dbReference type="SUPFAM" id="SSF50249">
    <property type="entry name" value="Nucleic acid-binding proteins"/>
    <property type="match status" value="1"/>
</dbReference>
<dbReference type="PROSITE" id="PS50935">
    <property type="entry name" value="SSB"/>
    <property type="match status" value="1"/>
</dbReference>
<proteinExistence type="inferred from homology"/>
<protein>
    <recommendedName>
        <fullName>Plasmid-derived single-stranded DNA-binding protein</fullName>
        <shortName evidence="2">SSB</shortName>
    </recommendedName>
    <alternativeName>
        <fullName>Helix-destabilizing protein</fullName>
    </alternativeName>
</protein>